<dbReference type="EC" id="6.5.1.1" evidence="2"/>
<dbReference type="EMBL" id="X17255">
    <property type="protein sequence ID" value="CAA35125.1"/>
    <property type="molecule type" value="Genomic_DNA"/>
</dbReference>
<dbReference type="EMBL" id="X05031">
    <property type="protein sequence ID" value="CAA28700.1"/>
    <property type="molecule type" value="Genomic_DNA"/>
</dbReference>
<dbReference type="PIR" id="S09539">
    <property type="entry name" value="S09539"/>
</dbReference>
<dbReference type="RefSeq" id="NP_523305.1">
    <property type="nucleotide sequence ID" value="NC_003298.1"/>
</dbReference>
<dbReference type="SMR" id="P07717"/>
<dbReference type="KEGG" id="vg:927441"/>
<dbReference type="OrthoDB" id="4135at10239"/>
<dbReference type="GO" id="GO:0005524">
    <property type="term" value="F:ATP binding"/>
    <property type="evidence" value="ECO:0007669"/>
    <property type="project" value="UniProtKB-KW"/>
</dbReference>
<dbReference type="GO" id="GO:0003910">
    <property type="term" value="F:DNA ligase (ATP) activity"/>
    <property type="evidence" value="ECO:0007669"/>
    <property type="project" value="UniProtKB-EC"/>
</dbReference>
<dbReference type="GO" id="GO:0003690">
    <property type="term" value="F:double-stranded DNA binding"/>
    <property type="evidence" value="ECO:0007669"/>
    <property type="project" value="InterPro"/>
</dbReference>
<dbReference type="GO" id="GO:0046872">
    <property type="term" value="F:metal ion binding"/>
    <property type="evidence" value="ECO:0007669"/>
    <property type="project" value="UniProtKB-KW"/>
</dbReference>
<dbReference type="GO" id="GO:0006310">
    <property type="term" value="P:DNA recombination"/>
    <property type="evidence" value="ECO:0007669"/>
    <property type="project" value="UniProtKB-KW"/>
</dbReference>
<dbReference type="GO" id="GO:0006281">
    <property type="term" value="P:DNA repair"/>
    <property type="evidence" value="ECO:0007669"/>
    <property type="project" value="UniProtKB-KW"/>
</dbReference>
<dbReference type="GO" id="GO:0006260">
    <property type="term" value="P:DNA replication"/>
    <property type="evidence" value="ECO:0007669"/>
    <property type="project" value="UniProtKB-KW"/>
</dbReference>
<dbReference type="Gene3D" id="3.30.1490.70">
    <property type="match status" value="1"/>
</dbReference>
<dbReference type="Gene3D" id="3.30.470.30">
    <property type="entry name" value="DNA ligase/mRNA capping enzyme"/>
    <property type="match status" value="1"/>
</dbReference>
<dbReference type="Gene3D" id="2.40.50.140">
    <property type="entry name" value="Nucleic acid-binding proteins"/>
    <property type="match status" value="1"/>
</dbReference>
<dbReference type="InterPro" id="IPR012310">
    <property type="entry name" value="DNA_ligase_ATP-dep_cent"/>
</dbReference>
<dbReference type="InterPro" id="IPR016059">
    <property type="entry name" value="DNA_ligase_ATP-dep_CS"/>
</dbReference>
<dbReference type="InterPro" id="IPR041559">
    <property type="entry name" value="DNA_ligase_ATP-dep_T7_C"/>
</dbReference>
<dbReference type="InterPro" id="IPR016306">
    <property type="entry name" value="DNA_ligase_T7"/>
</dbReference>
<dbReference type="InterPro" id="IPR012340">
    <property type="entry name" value="NA-bd_OB-fold"/>
</dbReference>
<dbReference type="InterPro" id="IPR050326">
    <property type="entry name" value="NAD_dep_DNA_ligaseB"/>
</dbReference>
<dbReference type="PANTHER" id="PTHR47810">
    <property type="entry name" value="DNA LIGASE"/>
    <property type="match status" value="1"/>
</dbReference>
<dbReference type="PANTHER" id="PTHR47810:SF1">
    <property type="entry name" value="DNA LIGASE B"/>
    <property type="match status" value="1"/>
</dbReference>
<dbReference type="Pfam" id="PF01068">
    <property type="entry name" value="DNA_ligase_A_M"/>
    <property type="match status" value="1"/>
</dbReference>
<dbReference type="Pfam" id="PF17879">
    <property type="entry name" value="DNA_ligase_C"/>
    <property type="match status" value="2"/>
</dbReference>
<dbReference type="PIRSF" id="PIRSF001600">
    <property type="entry name" value="DNA_ligase_phage_T3"/>
    <property type="match status" value="1"/>
</dbReference>
<dbReference type="SUPFAM" id="SSF56091">
    <property type="entry name" value="DNA ligase/mRNA capping enzyme, catalytic domain"/>
    <property type="match status" value="1"/>
</dbReference>
<dbReference type="SUPFAM" id="SSF50249">
    <property type="entry name" value="Nucleic acid-binding proteins"/>
    <property type="match status" value="1"/>
</dbReference>
<dbReference type="PROSITE" id="PS00697">
    <property type="entry name" value="DNA_LIGASE_A1"/>
    <property type="match status" value="1"/>
</dbReference>
<dbReference type="PROSITE" id="PS00333">
    <property type="entry name" value="DNA_LIGASE_A2"/>
    <property type="match status" value="1"/>
</dbReference>
<dbReference type="PROSITE" id="PS50160">
    <property type="entry name" value="DNA_LIGASE_A3"/>
    <property type="match status" value="1"/>
</dbReference>
<organism>
    <name type="scientific">Enterobacteria phage T3</name>
    <name type="common">Bacteriophage T3</name>
    <dbReference type="NCBI Taxonomy" id="10759"/>
    <lineage>
        <taxon>Viruses</taxon>
        <taxon>Duplodnaviria</taxon>
        <taxon>Heunggongvirae</taxon>
        <taxon>Uroviricota</taxon>
        <taxon>Caudoviricetes</taxon>
        <taxon>Autographiviridae</taxon>
        <taxon>Studiervirinae</taxon>
        <taxon>Teetrevirus</taxon>
        <taxon>Teetrevirus T3</taxon>
    </lineage>
</organism>
<accession>P07717</accession>
<sequence>MNIFNTNPFKAVSFVESAVKKALETSGYLIADCKYDGVRGNIVVDNVAEAAWLSRVSKFIPALEHLNGFDKRWQQLLNDDRCIFPDGFMLDGELMVKGVDFNTGSGLLRTKWVKRDNMGFHLTNVPTKLTPKGREVIDGKFEFHLDPKRLSVRLYAVMPIHIAESGEDYDVQNLLMPYHVEAMRSLLVEYFPEIEWLIAETYEVYDMDSLTELYEEKRAEGHEGLIVKDPQGIYKRGKKSGWWKLKPECEADGIIQGVNWGTEGLANEGKVIGFSVLLETGRLVDANNISRALMDEFTSNVKAHGEDFYNGWACQVNYMEATPDGSLRHPSFEKFRGTEDNPQEKM</sequence>
<gene>
    <name type="primary">1.3</name>
</gene>
<protein>
    <recommendedName>
        <fullName>DNA ligase</fullName>
        <ecNumber evidence="2">6.5.1.1</ecNumber>
    </recommendedName>
    <alternativeName>
        <fullName>Polydeoxyribonucleotide synthase [ATP]</fullName>
    </alternativeName>
</protein>
<name>DNLI_BPT3</name>
<feature type="chain" id="PRO_0000059597" description="DNA ligase">
    <location>
        <begin position="1"/>
        <end position="346"/>
    </location>
</feature>
<feature type="active site" description="N6-AMP-lysine intermediate" evidence="2">
    <location>
        <position position="34"/>
    </location>
</feature>
<feature type="binding site" evidence="1">
    <location>
        <begin position="32"/>
        <end position="35"/>
    </location>
    <ligand>
        <name>ATP</name>
        <dbReference type="ChEBI" id="CHEBI:30616"/>
    </ligand>
</feature>
<feature type="binding site" evidence="1">
    <location>
        <position position="39"/>
    </location>
    <ligand>
        <name>ATP</name>
        <dbReference type="ChEBI" id="CHEBI:30616"/>
    </ligand>
</feature>
<feature type="binding site" evidence="1">
    <location>
        <begin position="55"/>
        <end position="57"/>
    </location>
    <ligand>
        <name>ATP</name>
        <dbReference type="ChEBI" id="CHEBI:30616"/>
    </ligand>
</feature>
<feature type="binding site" evidence="1">
    <location>
        <position position="93"/>
    </location>
    <ligand>
        <name>ATP</name>
        <dbReference type="ChEBI" id="CHEBI:30616"/>
    </ligand>
</feature>
<feature type="binding site" evidence="1">
    <location>
        <position position="142"/>
    </location>
    <ligand>
        <name>ATP</name>
        <dbReference type="ChEBI" id="CHEBI:30616"/>
    </ligand>
</feature>
<feature type="binding site" evidence="1">
    <location>
        <position position="149"/>
    </location>
    <ligand>
        <name>ATP</name>
        <dbReference type="ChEBI" id="CHEBI:30616"/>
    </ligand>
</feature>
<feature type="binding site" evidence="1">
    <location>
        <position position="223"/>
    </location>
    <ligand>
        <name>a divalent metal cation</name>
        <dbReference type="ChEBI" id="CHEBI:60240"/>
    </ligand>
</feature>
<feature type="binding site" evidence="1">
    <location>
        <position position="238"/>
    </location>
    <ligand>
        <name>ATP</name>
        <dbReference type="ChEBI" id="CHEBI:30616"/>
    </ligand>
</feature>
<feature type="binding site" evidence="1">
    <location>
        <position position="244"/>
    </location>
    <ligand>
        <name>ATP</name>
        <dbReference type="ChEBI" id="CHEBI:30616"/>
    </ligand>
</feature>
<keyword id="KW-0067">ATP-binding</keyword>
<keyword id="KW-0227">DNA damage</keyword>
<keyword id="KW-0233">DNA recombination</keyword>
<keyword id="KW-0234">DNA repair</keyword>
<keyword id="KW-0235">DNA replication</keyword>
<keyword id="KW-0436">Ligase</keyword>
<keyword id="KW-0479">Metal-binding</keyword>
<keyword id="KW-0547">Nucleotide-binding</keyword>
<comment type="function">
    <text>DNA ligase, which is expressed in the early stage of lytic development, has been implicated in T7 DNA synthesis and genetic recombination. It may also play a role in T7 DNA repair.</text>
</comment>
<comment type="catalytic activity">
    <reaction evidence="2">
        <text>ATP + (deoxyribonucleotide)n-3'-hydroxyl + 5'-phospho-(deoxyribonucleotide)m = (deoxyribonucleotide)n+m + AMP + diphosphate.</text>
        <dbReference type="EC" id="6.5.1.1"/>
    </reaction>
</comment>
<comment type="cofactor">
    <cofactor evidence="1">
        <name>a divalent metal cation</name>
        <dbReference type="ChEBI" id="CHEBI:60240"/>
    </cofactor>
</comment>
<comment type="similarity">
    <text evidence="3">Belongs to the ATP-dependent DNA ligase family.</text>
</comment>
<organismHost>
    <name type="scientific">Escherichia coli</name>
    <dbReference type="NCBI Taxonomy" id="562"/>
</organismHost>
<evidence type="ECO:0000250" key="1"/>
<evidence type="ECO:0000255" key="2">
    <source>
        <dbReference type="PROSITE-ProRule" id="PRU10135"/>
    </source>
</evidence>
<evidence type="ECO:0000305" key="3"/>
<reference key="1">
    <citation type="journal article" date="1987" name="J. Mol. Biol.">
        <title>Sequence of a conditionally essential region of bacteriophage T3, including the primary origin of DNA replication.</title>
        <authorList>
            <person name="Schmitt M.P."/>
            <person name="Beck P.J."/>
            <person name="Kearney C.A."/>
            <person name="Spence J.L."/>
            <person name="Digiovanni D."/>
            <person name="Condreay J.P."/>
            <person name="Molineux I.J."/>
        </authorList>
    </citation>
    <scope>NUCLEOTIDE SEQUENCE [GENOMIC DNA]</scope>
    <source>
        <strain>Luria</strain>
    </source>
</reference>
<proteinExistence type="inferred from homology"/>